<keyword id="KW-0134">Cell wall</keyword>
<keyword id="KW-0961">Cell wall biogenesis/degradation</keyword>
<keyword id="KW-0325">Glycoprotein</keyword>
<keyword id="KW-0472">Membrane</keyword>
<keyword id="KW-1185">Reference proteome</keyword>
<keyword id="KW-0964">Secreted</keyword>
<keyword id="KW-0732">Signal</keyword>
<reference key="1">
    <citation type="journal article" date="2005" name="Nature">
        <title>The map-based sequence of the rice genome.</title>
        <authorList>
            <consortium name="International rice genome sequencing project (IRGSP)"/>
        </authorList>
    </citation>
    <scope>NUCLEOTIDE SEQUENCE [LARGE SCALE GENOMIC DNA]</scope>
    <source>
        <strain>cv. Nipponbare</strain>
    </source>
</reference>
<reference key="2">
    <citation type="journal article" date="2013" name="Rice">
        <title>Improvement of the Oryza sativa Nipponbare reference genome using next generation sequence and optical map data.</title>
        <authorList>
            <person name="Kawahara Y."/>
            <person name="de la Bastide M."/>
            <person name="Hamilton J.P."/>
            <person name="Kanamori H."/>
            <person name="McCombie W.R."/>
            <person name="Ouyang S."/>
            <person name="Schwartz D.C."/>
            <person name="Tanaka T."/>
            <person name="Wu J."/>
            <person name="Zhou S."/>
            <person name="Childs K.L."/>
            <person name="Davidson R.M."/>
            <person name="Lin H."/>
            <person name="Quesada-Ocampo L."/>
            <person name="Vaillancourt B."/>
            <person name="Sakai H."/>
            <person name="Lee S.S."/>
            <person name="Kim J."/>
            <person name="Numa H."/>
            <person name="Itoh T."/>
            <person name="Buell C.R."/>
            <person name="Matsumoto T."/>
        </authorList>
    </citation>
    <scope>GENOME REANNOTATION</scope>
    <source>
        <strain>cv. Nipponbare</strain>
    </source>
</reference>
<reference key="3">
    <citation type="journal article" date="2005" name="Mol. Cells">
        <title>Characterization and transcriptional expression of the alpha-expansin gene family in rice.</title>
        <authorList>
            <person name="Shin J.-H."/>
            <person name="Jeong D.-H."/>
            <person name="Park M.C."/>
            <person name="An G."/>
        </authorList>
    </citation>
    <scope>NUCLEOTIDE SEQUENCE [MRNA] OF 7-280</scope>
    <source>
        <strain>cv. Dongjin</strain>
    </source>
</reference>
<reference key="4">
    <citation type="journal article" date="2002" name="Plant Physiol.">
        <title>Expression of alpha-expansin and expansin-like genes in deepwater rice.</title>
        <authorList>
            <person name="Lee Y."/>
            <person name="Kende H."/>
        </authorList>
    </citation>
    <scope>NUCLEOTIDE SEQUENCE [GENOMIC DNA] OF 78-280</scope>
</reference>
<reference key="5">
    <citation type="journal article" date="2004" name="Plant Mol. Biol.">
        <title>Nomenclature for members of the expansin superfamily of genes and proteins.</title>
        <authorList>
            <person name="Kende H."/>
            <person name="Bradford K.J."/>
            <person name="Brummell D.A."/>
            <person name="Cho H.-T."/>
            <person name="Cosgrove D.J."/>
            <person name="Fleming A.J."/>
            <person name="Gehring C."/>
            <person name="Lee Y."/>
            <person name="McQueen-Mason S.J."/>
            <person name="Rose J.K.C."/>
            <person name="Voesenek L.A.C."/>
        </authorList>
    </citation>
    <scope>NOMENCLATURE</scope>
</reference>
<gene>
    <name type="primary">EXPA22</name>
    <name type="synonym">EXP22</name>
    <name type="ordered locus">Os02g0268600</name>
    <name type="ordered locus">LOC_Os02g16850</name>
    <name type="ORF">P0693E08.19</name>
</gene>
<protein>
    <recommendedName>
        <fullName>Expansin-A22</fullName>
    </recommendedName>
    <alternativeName>
        <fullName>Alpha-expansin-22</fullName>
    </alternativeName>
    <alternativeName>
        <fullName>OsEXP22</fullName>
    </alternativeName>
    <alternativeName>
        <fullName>OsEXPA22</fullName>
    </alternativeName>
    <alternativeName>
        <fullName>OsaEXPa1.9</fullName>
    </alternativeName>
</protein>
<sequence>MAPARPFALLFLAVTVGFVLLTAADDSANATATTTTAMAPSSSTDDAAPPVWLKAHATFYGGADASGTMGGACGYGDLYSQGYGTRNAALSTALFNDGASCGQCYKIACDRKRAPQWCRPGVTVTITATNFCPPNWDLPSDNGGWCNPPRPHFDMAQPAWEKIGIYRAGIIPVIYQRVPCVKKGGVRFTINGHDYFNLVLVTNVATTGLIKSMDVMGSNSTDWLPMVRNWGANWHSLSYLTGQMLSFRVTNMDGQTLVFRNIVPSGWKFGQTFASKLQFK</sequence>
<organism>
    <name type="scientific">Oryza sativa subsp. japonica</name>
    <name type="common">Rice</name>
    <dbReference type="NCBI Taxonomy" id="39947"/>
    <lineage>
        <taxon>Eukaryota</taxon>
        <taxon>Viridiplantae</taxon>
        <taxon>Streptophyta</taxon>
        <taxon>Embryophyta</taxon>
        <taxon>Tracheophyta</taxon>
        <taxon>Spermatophyta</taxon>
        <taxon>Magnoliopsida</taxon>
        <taxon>Liliopsida</taxon>
        <taxon>Poales</taxon>
        <taxon>Poaceae</taxon>
        <taxon>BOP clade</taxon>
        <taxon>Oryzoideae</taxon>
        <taxon>Oryzeae</taxon>
        <taxon>Oryzinae</taxon>
        <taxon>Oryza</taxon>
        <taxon>Oryza sativa</taxon>
    </lineage>
</organism>
<comment type="function">
    <text evidence="1">May cause loosening and extension of plant cell walls by disrupting non-covalent bonding between cellulose microfibrils and matrix glucans. No enzymatic activity has been found. May be required for rapid internodal elongation in deepwater rice during submergence (By similarity).</text>
</comment>
<comment type="subcellular location">
    <subcellularLocation>
        <location evidence="1">Secreted</location>
        <location evidence="1">Cell wall</location>
    </subcellularLocation>
    <subcellularLocation>
        <location evidence="1">Membrane</location>
        <topology evidence="1">Peripheral membrane protein</topology>
    </subcellularLocation>
</comment>
<comment type="similarity">
    <text evidence="5">Belongs to the expansin family. Expansin A subfamily.</text>
</comment>
<comment type="online information" name="EXPANSIN homepage">
    <link uri="https://www.dept.psu.edu/biology/groups/expansins/index.htm"/>
</comment>
<proteinExistence type="evidence at transcript level"/>
<evidence type="ECO:0000250" key="1"/>
<evidence type="ECO:0000255" key="2"/>
<evidence type="ECO:0000255" key="3">
    <source>
        <dbReference type="PROSITE-ProRule" id="PRU00078"/>
    </source>
</evidence>
<evidence type="ECO:0000255" key="4">
    <source>
        <dbReference type="PROSITE-ProRule" id="PRU00079"/>
    </source>
</evidence>
<evidence type="ECO:0000305" key="5"/>
<accession>Q4PR44</accession>
<accession>Q6ERU0</accession>
<accession>Q946I0</accession>
<name>EXP22_ORYSJ</name>
<dbReference type="EMBL" id="AP005428">
    <property type="protein sequence ID" value="BAD28630.1"/>
    <property type="molecule type" value="Genomic_DNA"/>
</dbReference>
<dbReference type="EMBL" id="AP014958">
    <property type="status" value="NOT_ANNOTATED_CDS"/>
    <property type="molecule type" value="Genomic_DNA"/>
</dbReference>
<dbReference type="EMBL" id="DQ061063">
    <property type="protein sequence ID" value="AAY63554.1"/>
    <property type="molecule type" value="mRNA"/>
</dbReference>
<dbReference type="EMBL" id="AF394557">
    <property type="protein sequence ID" value="AAL24493.1"/>
    <property type="molecule type" value="Genomic_DNA"/>
</dbReference>
<dbReference type="RefSeq" id="XP_015624729.1">
    <property type="nucleotide sequence ID" value="XM_015769243.1"/>
</dbReference>
<dbReference type="SMR" id="Q4PR44"/>
<dbReference type="FunCoup" id="Q4PR44">
    <property type="interactions" value="14"/>
</dbReference>
<dbReference type="STRING" id="39947.Q4PR44"/>
<dbReference type="GlyCosmos" id="Q4PR44">
    <property type="glycosylation" value="2 sites, No reported glycans"/>
</dbReference>
<dbReference type="PaxDb" id="39947-Q4PR44"/>
<dbReference type="eggNOG" id="ENOG502SWQD">
    <property type="taxonomic scope" value="Eukaryota"/>
</dbReference>
<dbReference type="HOGENOM" id="CLU_027462_0_1_1"/>
<dbReference type="InParanoid" id="Q4PR44"/>
<dbReference type="OrthoDB" id="5823761at2759"/>
<dbReference type="Proteomes" id="UP000000763">
    <property type="component" value="Chromosome 2"/>
</dbReference>
<dbReference type="Proteomes" id="UP000059680">
    <property type="component" value="Chromosome 2"/>
</dbReference>
<dbReference type="GO" id="GO:0005576">
    <property type="term" value="C:extracellular region"/>
    <property type="evidence" value="ECO:0007669"/>
    <property type="project" value="UniProtKB-KW"/>
</dbReference>
<dbReference type="GO" id="GO:0016020">
    <property type="term" value="C:membrane"/>
    <property type="evidence" value="ECO:0007669"/>
    <property type="project" value="UniProtKB-SubCell"/>
</dbReference>
<dbReference type="GO" id="GO:0009828">
    <property type="term" value="P:plant-type cell wall loosening"/>
    <property type="evidence" value="ECO:0000250"/>
    <property type="project" value="UniProtKB"/>
</dbReference>
<dbReference type="CDD" id="cd22274">
    <property type="entry name" value="DPBB_EXPA_N"/>
    <property type="match status" value="1"/>
</dbReference>
<dbReference type="FunFam" id="2.40.40.10:FF:000001">
    <property type="entry name" value="Expansin"/>
    <property type="match status" value="1"/>
</dbReference>
<dbReference type="Gene3D" id="2.60.40.760">
    <property type="entry name" value="Expansin, cellulose-binding-like domain"/>
    <property type="match status" value="1"/>
</dbReference>
<dbReference type="Gene3D" id="2.40.40.10">
    <property type="entry name" value="RlpA-like domain"/>
    <property type="match status" value="1"/>
</dbReference>
<dbReference type="InterPro" id="IPR007118">
    <property type="entry name" value="Expan_Lol_pI"/>
</dbReference>
<dbReference type="InterPro" id="IPR002963">
    <property type="entry name" value="Expansin"/>
</dbReference>
<dbReference type="InterPro" id="IPR007112">
    <property type="entry name" value="Expansin/allergen_DPBB_dom"/>
</dbReference>
<dbReference type="InterPro" id="IPR007117">
    <property type="entry name" value="Expansin_CBD"/>
</dbReference>
<dbReference type="InterPro" id="IPR036749">
    <property type="entry name" value="Expansin_CBD_sf"/>
</dbReference>
<dbReference type="InterPro" id="IPR009009">
    <property type="entry name" value="RlpA-like_DPBB"/>
</dbReference>
<dbReference type="InterPro" id="IPR036908">
    <property type="entry name" value="RlpA-like_sf"/>
</dbReference>
<dbReference type="PANTHER" id="PTHR31867">
    <property type="entry name" value="EXPANSIN-A15"/>
    <property type="match status" value="1"/>
</dbReference>
<dbReference type="Pfam" id="PF03330">
    <property type="entry name" value="DPBB_1"/>
    <property type="match status" value="1"/>
</dbReference>
<dbReference type="Pfam" id="PF01357">
    <property type="entry name" value="Expansin_C"/>
    <property type="match status" value="1"/>
</dbReference>
<dbReference type="PRINTS" id="PR01226">
    <property type="entry name" value="EXPANSIN"/>
</dbReference>
<dbReference type="PRINTS" id="PR01225">
    <property type="entry name" value="EXPANSNFAMLY"/>
</dbReference>
<dbReference type="SMART" id="SM00837">
    <property type="entry name" value="DPBB_1"/>
    <property type="match status" value="1"/>
</dbReference>
<dbReference type="SUPFAM" id="SSF50685">
    <property type="entry name" value="Barwin-like endoglucanases"/>
    <property type="match status" value="1"/>
</dbReference>
<dbReference type="SUPFAM" id="SSF49590">
    <property type="entry name" value="PHL pollen allergen"/>
    <property type="match status" value="1"/>
</dbReference>
<dbReference type="PROSITE" id="PS50843">
    <property type="entry name" value="EXPANSIN_CBD"/>
    <property type="match status" value="1"/>
</dbReference>
<dbReference type="PROSITE" id="PS50842">
    <property type="entry name" value="EXPANSIN_EG45"/>
    <property type="match status" value="1"/>
</dbReference>
<feature type="signal peptide" evidence="2">
    <location>
        <begin position="1"/>
        <end position="24"/>
    </location>
</feature>
<feature type="chain" id="PRO_0000252001" description="Expansin-A22">
    <location>
        <begin position="25"/>
        <end position="280"/>
    </location>
</feature>
<feature type="domain" description="Expansin-like EG45" evidence="4">
    <location>
        <begin position="70"/>
        <end position="185"/>
    </location>
</feature>
<feature type="domain" description="Expansin-like CBD" evidence="3">
    <location>
        <begin position="195"/>
        <end position="275"/>
    </location>
</feature>
<feature type="glycosylation site" description="N-linked (GlcNAc...) asparagine" evidence="2">
    <location>
        <position position="29"/>
    </location>
</feature>
<feature type="glycosylation site" description="N-linked (GlcNAc...) asparagine" evidence="2">
    <location>
        <position position="219"/>
    </location>
</feature>
<feature type="sequence conflict" description="In Ref. 4; AAL24493." evidence="5" ref="4">
    <original>Y</original>
    <variation>D</variation>
    <location>
        <position position="83"/>
    </location>
</feature>